<name>PSTB_BACTN</name>
<feature type="chain" id="PRO_0000092782" description="Phosphate import ATP-binding protein PstB">
    <location>
        <begin position="1"/>
        <end position="252"/>
    </location>
</feature>
<feature type="domain" description="ABC transporter" evidence="1">
    <location>
        <begin position="6"/>
        <end position="247"/>
    </location>
</feature>
<feature type="binding site" evidence="1">
    <location>
        <begin position="38"/>
        <end position="45"/>
    </location>
    <ligand>
        <name>ATP</name>
        <dbReference type="ChEBI" id="CHEBI:30616"/>
    </ligand>
</feature>
<gene>
    <name evidence="1" type="primary">pstB</name>
    <name type="ordered locus">BT_1321</name>
</gene>
<organism>
    <name type="scientific">Bacteroides thetaiotaomicron (strain ATCC 29148 / DSM 2079 / JCM 5827 / CCUG 10774 / NCTC 10582 / VPI-5482 / E50)</name>
    <dbReference type="NCBI Taxonomy" id="226186"/>
    <lineage>
        <taxon>Bacteria</taxon>
        <taxon>Pseudomonadati</taxon>
        <taxon>Bacteroidota</taxon>
        <taxon>Bacteroidia</taxon>
        <taxon>Bacteroidales</taxon>
        <taxon>Bacteroidaceae</taxon>
        <taxon>Bacteroides</taxon>
    </lineage>
</organism>
<comment type="function">
    <text evidence="1">Part of the ABC transporter complex PstSACB involved in phosphate import. Responsible for energy coupling to the transport system.</text>
</comment>
<comment type="catalytic activity">
    <reaction evidence="1">
        <text>phosphate(out) + ATP + H2O = ADP + 2 phosphate(in) + H(+)</text>
        <dbReference type="Rhea" id="RHEA:24440"/>
        <dbReference type="ChEBI" id="CHEBI:15377"/>
        <dbReference type="ChEBI" id="CHEBI:15378"/>
        <dbReference type="ChEBI" id="CHEBI:30616"/>
        <dbReference type="ChEBI" id="CHEBI:43474"/>
        <dbReference type="ChEBI" id="CHEBI:456216"/>
        <dbReference type="EC" id="7.3.2.1"/>
    </reaction>
</comment>
<comment type="subunit">
    <text evidence="1">The complex is composed of two ATP-binding proteins (PstB), two transmembrane proteins (PstC and PstA) and a solute-binding protein (PstS).</text>
</comment>
<comment type="subcellular location">
    <subcellularLocation>
        <location evidence="1">Cell inner membrane</location>
        <topology evidence="1">Peripheral membrane protein</topology>
    </subcellularLocation>
</comment>
<comment type="similarity">
    <text evidence="1">Belongs to the ABC transporter superfamily. Phosphate importer (TC 3.A.1.7) family.</text>
</comment>
<dbReference type="EC" id="7.3.2.1" evidence="1"/>
<dbReference type="EMBL" id="AE015928">
    <property type="protein sequence ID" value="AAO76428.1"/>
    <property type="molecule type" value="Genomic_DNA"/>
</dbReference>
<dbReference type="RefSeq" id="NP_810234.1">
    <property type="nucleotide sequence ID" value="NC_004663.1"/>
</dbReference>
<dbReference type="RefSeq" id="WP_010538553.1">
    <property type="nucleotide sequence ID" value="NC_004663.1"/>
</dbReference>
<dbReference type="SMR" id="Q8A853"/>
<dbReference type="FunCoup" id="Q8A853">
    <property type="interactions" value="349"/>
</dbReference>
<dbReference type="STRING" id="226186.BT_1321"/>
<dbReference type="PaxDb" id="226186-BT_1321"/>
<dbReference type="EnsemblBacteria" id="AAO76428">
    <property type="protein sequence ID" value="AAO76428"/>
    <property type="gene ID" value="BT_1321"/>
</dbReference>
<dbReference type="GeneID" id="69591032"/>
<dbReference type="KEGG" id="bth:BT_1321"/>
<dbReference type="PATRIC" id="fig|226186.12.peg.1351"/>
<dbReference type="eggNOG" id="COG1117">
    <property type="taxonomic scope" value="Bacteria"/>
</dbReference>
<dbReference type="HOGENOM" id="CLU_000604_1_22_10"/>
<dbReference type="InParanoid" id="Q8A853"/>
<dbReference type="OrthoDB" id="9782239at2"/>
<dbReference type="Proteomes" id="UP000001414">
    <property type="component" value="Chromosome"/>
</dbReference>
<dbReference type="GO" id="GO:0005886">
    <property type="term" value="C:plasma membrane"/>
    <property type="evidence" value="ECO:0007669"/>
    <property type="project" value="UniProtKB-SubCell"/>
</dbReference>
<dbReference type="GO" id="GO:0005524">
    <property type="term" value="F:ATP binding"/>
    <property type="evidence" value="ECO:0007669"/>
    <property type="project" value="UniProtKB-KW"/>
</dbReference>
<dbReference type="GO" id="GO:0016887">
    <property type="term" value="F:ATP hydrolysis activity"/>
    <property type="evidence" value="ECO:0007669"/>
    <property type="project" value="InterPro"/>
</dbReference>
<dbReference type="GO" id="GO:0015415">
    <property type="term" value="F:ATPase-coupled phosphate ion transmembrane transporter activity"/>
    <property type="evidence" value="ECO:0007669"/>
    <property type="project" value="UniProtKB-EC"/>
</dbReference>
<dbReference type="GO" id="GO:0035435">
    <property type="term" value="P:phosphate ion transmembrane transport"/>
    <property type="evidence" value="ECO:0007669"/>
    <property type="project" value="InterPro"/>
</dbReference>
<dbReference type="CDD" id="cd03260">
    <property type="entry name" value="ABC_PstB_phosphate_transporter"/>
    <property type="match status" value="1"/>
</dbReference>
<dbReference type="FunFam" id="3.40.50.300:FF:000132">
    <property type="entry name" value="Phosphate import ATP-binding protein PstB"/>
    <property type="match status" value="1"/>
</dbReference>
<dbReference type="Gene3D" id="3.40.50.300">
    <property type="entry name" value="P-loop containing nucleotide triphosphate hydrolases"/>
    <property type="match status" value="1"/>
</dbReference>
<dbReference type="InterPro" id="IPR003593">
    <property type="entry name" value="AAA+_ATPase"/>
</dbReference>
<dbReference type="InterPro" id="IPR003439">
    <property type="entry name" value="ABC_transporter-like_ATP-bd"/>
</dbReference>
<dbReference type="InterPro" id="IPR017871">
    <property type="entry name" value="ABC_transporter-like_CS"/>
</dbReference>
<dbReference type="InterPro" id="IPR027417">
    <property type="entry name" value="P-loop_NTPase"/>
</dbReference>
<dbReference type="InterPro" id="IPR005670">
    <property type="entry name" value="PstB-like"/>
</dbReference>
<dbReference type="NCBIfam" id="TIGR00972">
    <property type="entry name" value="3a0107s01c2"/>
    <property type="match status" value="1"/>
</dbReference>
<dbReference type="PANTHER" id="PTHR43423">
    <property type="entry name" value="ABC TRANSPORTER I FAMILY MEMBER 17"/>
    <property type="match status" value="1"/>
</dbReference>
<dbReference type="PANTHER" id="PTHR43423:SF1">
    <property type="entry name" value="ABC TRANSPORTER I FAMILY MEMBER 17"/>
    <property type="match status" value="1"/>
</dbReference>
<dbReference type="Pfam" id="PF00005">
    <property type="entry name" value="ABC_tran"/>
    <property type="match status" value="1"/>
</dbReference>
<dbReference type="SMART" id="SM00382">
    <property type="entry name" value="AAA"/>
    <property type="match status" value="1"/>
</dbReference>
<dbReference type="SUPFAM" id="SSF52540">
    <property type="entry name" value="P-loop containing nucleoside triphosphate hydrolases"/>
    <property type="match status" value="1"/>
</dbReference>
<dbReference type="PROSITE" id="PS00211">
    <property type="entry name" value="ABC_TRANSPORTER_1"/>
    <property type="match status" value="1"/>
</dbReference>
<dbReference type="PROSITE" id="PS50893">
    <property type="entry name" value="ABC_TRANSPORTER_2"/>
    <property type="match status" value="1"/>
</dbReference>
<dbReference type="PROSITE" id="PS51238">
    <property type="entry name" value="PSTB"/>
    <property type="match status" value="1"/>
</dbReference>
<protein>
    <recommendedName>
        <fullName evidence="1">Phosphate import ATP-binding protein PstB</fullName>
        <ecNumber evidence="1">7.3.2.1</ecNumber>
    </recommendedName>
    <alternativeName>
        <fullName evidence="1">ABC phosphate transporter</fullName>
    </alternativeName>
    <alternativeName>
        <fullName evidence="1">Phosphate-transporting ATPase</fullName>
    </alternativeName>
</protein>
<keyword id="KW-0067">ATP-binding</keyword>
<keyword id="KW-0997">Cell inner membrane</keyword>
<keyword id="KW-1003">Cell membrane</keyword>
<keyword id="KW-0472">Membrane</keyword>
<keyword id="KW-0547">Nucleotide-binding</keyword>
<keyword id="KW-0592">Phosphate transport</keyword>
<keyword id="KW-1185">Reference proteome</keyword>
<keyword id="KW-1278">Translocase</keyword>
<keyword id="KW-0813">Transport</keyword>
<evidence type="ECO:0000255" key="1">
    <source>
        <dbReference type="HAMAP-Rule" id="MF_01702"/>
    </source>
</evidence>
<reference key="1">
    <citation type="journal article" date="2003" name="Science">
        <title>A genomic view of the human-Bacteroides thetaiotaomicron symbiosis.</title>
        <authorList>
            <person name="Xu J."/>
            <person name="Bjursell M.K."/>
            <person name="Himrod J."/>
            <person name="Deng S."/>
            <person name="Carmichael L.K."/>
            <person name="Chiang H.C."/>
            <person name="Hooper L.V."/>
            <person name="Gordon J.I."/>
        </authorList>
    </citation>
    <scope>NUCLEOTIDE SEQUENCE [LARGE SCALE GENOMIC DNA]</scope>
    <source>
        <strain>ATCC 29148 / DSM 2079 / JCM 5827 / CCUG 10774 / NCTC 10582 / VPI-5482 / E50</strain>
    </source>
</reference>
<proteinExistence type="inferred from homology"/>
<sequence length="252" mass="28421">MDTVKIDTRDVNFWYGDFHALKGISMQIEEKSVVAFIGPSGCGKSTFLRLFNRMNDLIPATRLEGEIRIDGHNIYAKGVEVDELRKNVGMVFQRPNPFPKSIFENVAYGLRVNGVKDNAFIRQRVEETLKGAALWDEVKDKLKESAYALSGGQQQRLCIARAMAVSPSVLLMDEPASALDPISTAKVEELIHELKKDYTIVIVTHNMQQAARVSDKTAFFYLGEMVEYDDTKKIFTNPEKEATQNYITGRFG</sequence>
<accession>Q8A853</accession>